<reference key="1">
    <citation type="journal article" date="1995" name="Science">
        <title>The minimal gene complement of Mycoplasma genitalium.</title>
        <authorList>
            <person name="Fraser C.M."/>
            <person name="Gocayne J.D."/>
            <person name="White O."/>
            <person name="Adams M.D."/>
            <person name="Clayton R.A."/>
            <person name="Fleischmann R.D."/>
            <person name="Bult C.J."/>
            <person name="Kerlavage A.R."/>
            <person name="Sutton G.G."/>
            <person name="Kelley J.M."/>
            <person name="Fritchman J.L."/>
            <person name="Weidman J.F."/>
            <person name="Small K.V."/>
            <person name="Sandusky M."/>
            <person name="Fuhrmann J.L."/>
            <person name="Nguyen D.T."/>
            <person name="Utterback T.R."/>
            <person name="Saudek D.M."/>
            <person name="Phillips C.A."/>
            <person name="Merrick J.M."/>
            <person name="Tomb J.-F."/>
            <person name="Dougherty B.A."/>
            <person name="Bott K.F."/>
            <person name="Hu P.-C."/>
            <person name="Lucier T.S."/>
            <person name="Peterson S.N."/>
            <person name="Smith H.O."/>
            <person name="Hutchison C.A. III"/>
            <person name="Venter J.C."/>
        </authorList>
    </citation>
    <scope>NUCLEOTIDE SEQUENCE [LARGE SCALE GENOMIC DNA]</scope>
    <source>
        <strain>ATCC 33530 / DSM 19775 / NCTC 10195 / G37</strain>
    </source>
</reference>
<reference key="2">
    <citation type="journal article" date="1993" name="J. Bacteriol.">
        <title>A survey of the Mycoplasma genitalium genome by using random sequencing.</title>
        <authorList>
            <person name="Peterson S.N."/>
            <person name="Hu P.-C."/>
            <person name="Bott K.F."/>
            <person name="Hutchison C.A. III"/>
        </authorList>
    </citation>
    <scope>NUCLEOTIDE SEQUENCE [GENOMIC DNA] OF 1-93 AND 406-530</scope>
    <source>
        <strain>ATCC 33530 / DSM 19775 / NCTC 10195 / G37</strain>
    </source>
</reference>
<gene>
    <name type="primary">p69</name>
    <name type="ordered locus">MG291</name>
</gene>
<organism>
    <name type="scientific">Mycoplasma genitalium (strain ATCC 33530 / DSM 19775 / NCTC 10195 / G37)</name>
    <name type="common">Mycoplasmoides genitalium</name>
    <dbReference type="NCBI Taxonomy" id="243273"/>
    <lineage>
        <taxon>Bacteria</taxon>
        <taxon>Bacillati</taxon>
        <taxon>Mycoplasmatota</taxon>
        <taxon>Mycoplasmoidales</taxon>
        <taxon>Mycoplasmoidaceae</taxon>
        <taxon>Mycoplasmoides</taxon>
    </lineage>
</organism>
<dbReference type="EMBL" id="L43967">
    <property type="protein sequence ID" value="AAC71512.1"/>
    <property type="molecule type" value="Genomic_DNA"/>
</dbReference>
<dbReference type="EMBL" id="U02171">
    <property type="protein sequence ID" value="AAD12453.1"/>
    <property type="status" value="ALT_INIT"/>
    <property type="molecule type" value="Genomic_DNA"/>
</dbReference>
<dbReference type="EMBL" id="U01768">
    <property type="protein sequence ID" value="AAD10585.1"/>
    <property type="molecule type" value="Genomic_DNA"/>
</dbReference>
<dbReference type="PIR" id="B64232">
    <property type="entry name" value="B64232"/>
</dbReference>
<dbReference type="RefSeq" id="WP_010869410.1">
    <property type="nucleotide sequence ID" value="NC_000908.2"/>
</dbReference>
<dbReference type="SMR" id="P47533"/>
<dbReference type="STRING" id="243273.MG_291"/>
<dbReference type="GeneID" id="88282453"/>
<dbReference type="KEGG" id="mge:MG_291"/>
<dbReference type="eggNOG" id="COG3639">
    <property type="taxonomic scope" value="Bacteria"/>
</dbReference>
<dbReference type="HOGENOM" id="CLU_479675_0_0_14"/>
<dbReference type="InParanoid" id="P47533"/>
<dbReference type="OrthoDB" id="401373at2"/>
<dbReference type="BioCyc" id="MGEN243273:G1GJ2-359-MONOMER"/>
<dbReference type="Proteomes" id="UP000000807">
    <property type="component" value="Chromosome"/>
</dbReference>
<dbReference type="GO" id="GO:0005886">
    <property type="term" value="C:plasma membrane"/>
    <property type="evidence" value="ECO:0007669"/>
    <property type="project" value="UniProtKB-SubCell"/>
</dbReference>
<dbReference type="GO" id="GO:0055085">
    <property type="term" value="P:transmembrane transport"/>
    <property type="evidence" value="ECO:0007669"/>
    <property type="project" value="InterPro"/>
</dbReference>
<dbReference type="Gene3D" id="1.10.3720.10">
    <property type="entry name" value="MetI-like"/>
    <property type="match status" value="1"/>
</dbReference>
<dbReference type="InterPro" id="IPR000515">
    <property type="entry name" value="MetI-like"/>
</dbReference>
<dbReference type="InterPro" id="IPR035906">
    <property type="entry name" value="MetI-like_sf"/>
</dbReference>
<dbReference type="PANTHER" id="PTHR30043:SF1">
    <property type="entry name" value="ABC TRANSPORT SYSTEM PERMEASE PROTEIN P69"/>
    <property type="match status" value="1"/>
</dbReference>
<dbReference type="PANTHER" id="PTHR30043">
    <property type="entry name" value="PHOSPHONATES TRANSPORT SYSTEM PERMEASE PROTEIN"/>
    <property type="match status" value="1"/>
</dbReference>
<dbReference type="SUPFAM" id="SSF161098">
    <property type="entry name" value="MetI-like"/>
    <property type="match status" value="2"/>
</dbReference>
<dbReference type="PROSITE" id="PS50928">
    <property type="entry name" value="ABC_TM1"/>
    <property type="match status" value="1"/>
</dbReference>
<accession>P47533</accession>
<accession>Q49219</accession>
<accession>Q49294</accession>
<evidence type="ECO:0000255" key="1">
    <source>
        <dbReference type="PROSITE-ProRule" id="PRU00441"/>
    </source>
</evidence>
<evidence type="ECO:0000305" key="2"/>
<comment type="function">
    <text>Probably part of a high-affinity transport system.</text>
</comment>
<comment type="subcellular location">
    <subcellularLocation>
        <location evidence="2">Cell membrane</location>
        <topology evidence="1">Multi-pass membrane protein</topology>
    </subcellularLocation>
</comment>
<comment type="domain">
    <text>Composed of two homologous domains.</text>
</comment>
<comment type="similarity">
    <text evidence="2">Belongs to the binding-protein-dependent transport system permease family.</text>
</comment>
<comment type="sequence caution" evidence="2">
    <conflict type="erroneous initiation">
        <sequence resource="EMBL-CDS" id="AAD12453"/>
    </conflict>
</comment>
<keyword id="KW-1003">Cell membrane</keyword>
<keyword id="KW-0472">Membrane</keyword>
<keyword id="KW-1185">Reference proteome</keyword>
<keyword id="KW-0677">Repeat</keyword>
<keyword id="KW-0812">Transmembrane</keyword>
<keyword id="KW-1133">Transmembrane helix</keyword>
<keyword id="KW-0813">Transport</keyword>
<feature type="chain" id="PRO_0000060169" description="ABC transport system permease protein p69">
    <location>
        <begin position="1"/>
        <end position="543"/>
    </location>
</feature>
<feature type="transmembrane region" description="Helical" evidence="1">
    <location>
        <begin position="18"/>
        <end position="38"/>
    </location>
</feature>
<feature type="transmembrane region" description="Helical" evidence="1">
    <location>
        <begin position="78"/>
        <end position="98"/>
    </location>
</feature>
<feature type="transmembrane region" description="Helical" evidence="1">
    <location>
        <begin position="115"/>
        <end position="135"/>
    </location>
</feature>
<feature type="transmembrane region" description="Helical" evidence="1">
    <location>
        <begin position="141"/>
        <end position="161"/>
    </location>
</feature>
<feature type="transmembrane region" description="Helical" evidence="1">
    <location>
        <begin position="211"/>
        <end position="231"/>
    </location>
</feature>
<feature type="transmembrane region" description="Helical" evidence="1">
    <location>
        <begin position="237"/>
        <end position="257"/>
    </location>
</feature>
<feature type="transmembrane region" description="Helical" evidence="1">
    <location>
        <begin position="288"/>
        <end position="308"/>
    </location>
</feature>
<feature type="transmembrane region" description="Helical" evidence="1">
    <location>
        <begin position="354"/>
        <end position="374"/>
    </location>
</feature>
<feature type="transmembrane region" description="Helical" evidence="1">
    <location>
        <begin position="379"/>
        <end position="399"/>
    </location>
</feature>
<feature type="transmembrane region" description="Helical" evidence="1">
    <location>
        <begin position="413"/>
        <end position="433"/>
    </location>
</feature>
<feature type="transmembrane region" description="Helical" evidence="1">
    <location>
        <begin position="482"/>
        <end position="502"/>
    </location>
</feature>
<feature type="transmembrane region" description="Helical" evidence="1">
    <location>
        <begin position="510"/>
        <end position="530"/>
    </location>
</feature>
<feature type="domain" description="ABC transmembrane type-1" evidence="1">
    <location>
        <begin position="74"/>
        <end position="256"/>
    </location>
</feature>
<feature type="sequence conflict" description="In Ref. 2." evidence="2" ref="2">
    <original>YLIAIEIIFLSV</original>
    <variation>LSNCNRNNFSFS</variation>
    <location>
        <begin position="519"/>
        <end position="530"/>
    </location>
</feature>
<name>P69_MYCGE</name>
<proteinExistence type="inferred from homology"/>
<sequence length="543" mass="63076">MITKLFFHQVGDNKKRLIWYWKLLIIIAVLAIVIYSWIDNFSSFNQFGLNVFINNITSLFTPNLNHEYTLVRFLAQTAFFVTGGSFLGFIFAILFSYWTAFKIQPFYIALPIRLITIVLRAFPVLLFGFLFSNLFNKQLAATLTISWFSFLWNTKYITTFFENSNLKYFFNKKIREGSGFKAFWTTIFLSENERLWLFFLYSLEANFRWTTLLSIFGIGGIGQLIVDPLSIRVQFDLVLIPLVVLITFLIFIEVVVFLLSSFVFEKNSEDLRPILKTTVIEKRKWKRIIFILFIVVLISLSLANLVTIDYRINDAEFLQDFFNQFFQLKSNLFSSNDPNINPILMLVKLTTQAISLISLVVIFSILFGFISCNLFKKRFSISFKILLLFVRVVPSILLFRLLDPLFLEAKTTIILVLLINHGSSYGQLMSINFNKANQNIINNYKNHGMTKGFILWNYLLVENKPNLINITSDAYDSVIRDLILFGSFGGSIIGSRITNFFERAQFDNLGSVTIPLMVYLIAIEIIFLSVRLTRISVFKNYLY</sequence>
<protein>
    <recommendedName>
        <fullName>ABC transport system permease protein p69</fullName>
    </recommendedName>
</protein>